<evidence type="ECO:0000255" key="1">
    <source>
        <dbReference type="HAMAP-Rule" id="MF_00087"/>
    </source>
</evidence>
<keyword id="KW-0521">NADP</keyword>
<keyword id="KW-0560">Oxidoreductase</keyword>
<keyword id="KW-0627">Porphyrin biosynthesis</keyword>
<proteinExistence type="inferred from homology"/>
<reference key="1">
    <citation type="journal article" date="2010" name="Genome Biol. Evol.">
        <title>Continuing evolution of Burkholderia mallei through genome reduction and large-scale rearrangements.</title>
        <authorList>
            <person name="Losada L."/>
            <person name="Ronning C.M."/>
            <person name="DeShazer D."/>
            <person name="Woods D."/>
            <person name="Fedorova N."/>
            <person name="Kim H.S."/>
            <person name="Shabalina S.A."/>
            <person name="Pearson T.R."/>
            <person name="Brinkac L."/>
            <person name="Tan P."/>
            <person name="Nandi T."/>
            <person name="Crabtree J."/>
            <person name="Badger J."/>
            <person name="Beckstrom-Sternberg S."/>
            <person name="Saqib M."/>
            <person name="Schutzer S.E."/>
            <person name="Keim P."/>
            <person name="Nierman W.C."/>
        </authorList>
    </citation>
    <scope>NUCLEOTIDE SEQUENCE [LARGE SCALE GENOMIC DNA]</scope>
    <source>
        <strain>1106a</strain>
    </source>
</reference>
<dbReference type="EC" id="1.2.1.70" evidence="1"/>
<dbReference type="EMBL" id="CP000572">
    <property type="protein sequence ID" value="ABN91520.1"/>
    <property type="molecule type" value="Genomic_DNA"/>
</dbReference>
<dbReference type="SMR" id="A3NZS3"/>
<dbReference type="KEGG" id="bpl:BURPS1106A_3613"/>
<dbReference type="HOGENOM" id="CLU_035113_2_2_4"/>
<dbReference type="UniPathway" id="UPA00251">
    <property type="reaction ID" value="UER00316"/>
</dbReference>
<dbReference type="Proteomes" id="UP000006738">
    <property type="component" value="Chromosome I"/>
</dbReference>
<dbReference type="GO" id="GO:0008883">
    <property type="term" value="F:glutamyl-tRNA reductase activity"/>
    <property type="evidence" value="ECO:0007669"/>
    <property type="project" value="UniProtKB-UniRule"/>
</dbReference>
<dbReference type="GO" id="GO:0050661">
    <property type="term" value="F:NADP binding"/>
    <property type="evidence" value="ECO:0007669"/>
    <property type="project" value="InterPro"/>
</dbReference>
<dbReference type="GO" id="GO:0019353">
    <property type="term" value="P:protoporphyrinogen IX biosynthetic process from glutamate"/>
    <property type="evidence" value="ECO:0007669"/>
    <property type="project" value="TreeGrafter"/>
</dbReference>
<dbReference type="CDD" id="cd05213">
    <property type="entry name" value="NAD_bind_Glutamyl_tRNA_reduct"/>
    <property type="match status" value="1"/>
</dbReference>
<dbReference type="FunFam" id="3.30.460.30:FF:000001">
    <property type="entry name" value="Glutamyl-tRNA reductase"/>
    <property type="match status" value="1"/>
</dbReference>
<dbReference type="FunFam" id="3.40.50.720:FF:000031">
    <property type="entry name" value="Glutamyl-tRNA reductase"/>
    <property type="match status" value="1"/>
</dbReference>
<dbReference type="Gene3D" id="3.30.460.30">
    <property type="entry name" value="Glutamyl-tRNA reductase, N-terminal domain"/>
    <property type="match status" value="1"/>
</dbReference>
<dbReference type="Gene3D" id="3.40.50.720">
    <property type="entry name" value="NAD(P)-binding Rossmann-like Domain"/>
    <property type="match status" value="1"/>
</dbReference>
<dbReference type="HAMAP" id="MF_00087">
    <property type="entry name" value="Glu_tRNA_reductase"/>
    <property type="match status" value="1"/>
</dbReference>
<dbReference type="InterPro" id="IPR000343">
    <property type="entry name" value="4pyrrol_synth_GluRdtase"/>
</dbReference>
<dbReference type="InterPro" id="IPR015896">
    <property type="entry name" value="4pyrrol_synth_GluRdtase_dimer"/>
</dbReference>
<dbReference type="InterPro" id="IPR015895">
    <property type="entry name" value="4pyrrol_synth_GluRdtase_N"/>
</dbReference>
<dbReference type="InterPro" id="IPR018214">
    <property type="entry name" value="GluRdtase_CS"/>
</dbReference>
<dbReference type="InterPro" id="IPR036453">
    <property type="entry name" value="GluRdtase_dimer_dom_sf"/>
</dbReference>
<dbReference type="InterPro" id="IPR036343">
    <property type="entry name" value="GluRdtase_N_sf"/>
</dbReference>
<dbReference type="InterPro" id="IPR036291">
    <property type="entry name" value="NAD(P)-bd_dom_sf"/>
</dbReference>
<dbReference type="InterPro" id="IPR006151">
    <property type="entry name" value="Shikm_DH/Glu-tRNA_Rdtase"/>
</dbReference>
<dbReference type="NCBIfam" id="TIGR01035">
    <property type="entry name" value="hemA"/>
    <property type="match status" value="1"/>
</dbReference>
<dbReference type="PANTHER" id="PTHR43013">
    <property type="entry name" value="GLUTAMYL-TRNA REDUCTASE"/>
    <property type="match status" value="1"/>
</dbReference>
<dbReference type="PANTHER" id="PTHR43013:SF1">
    <property type="entry name" value="GLUTAMYL-TRNA REDUCTASE"/>
    <property type="match status" value="1"/>
</dbReference>
<dbReference type="Pfam" id="PF00745">
    <property type="entry name" value="GlutR_dimer"/>
    <property type="match status" value="1"/>
</dbReference>
<dbReference type="Pfam" id="PF05201">
    <property type="entry name" value="GlutR_N"/>
    <property type="match status" value="1"/>
</dbReference>
<dbReference type="Pfam" id="PF01488">
    <property type="entry name" value="Shikimate_DH"/>
    <property type="match status" value="1"/>
</dbReference>
<dbReference type="PIRSF" id="PIRSF000445">
    <property type="entry name" value="4pyrrol_synth_GluRdtase"/>
    <property type="match status" value="1"/>
</dbReference>
<dbReference type="SUPFAM" id="SSF69742">
    <property type="entry name" value="Glutamyl tRNA-reductase catalytic, N-terminal domain"/>
    <property type="match status" value="1"/>
</dbReference>
<dbReference type="SUPFAM" id="SSF69075">
    <property type="entry name" value="Glutamyl tRNA-reductase dimerization domain"/>
    <property type="match status" value="1"/>
</dbReference>
<dbReference type="SUPFAM" id="SSF51735">
    <property type="entry name" value="NAD(P)-binding Rossmann-fold domains"/>
    <property type="match status" value="1"/>
</dbReference>
<dbReference type="PROSITE" id="PS00747">
    <property type="entry name" value="GLUTR"/>
    <property type="match status" value="1"/>
</dbReference>
<comment type="function">
    <text evidence="1">Catalyzes the NADPH-dependent reduction of glutamyl-tRNA(Glu) to glutamate 1-semialdehyde (GSA).</text>
</comment>
<comment type="catalytic activity">
    <reaction evidence="1">
        <text>(S)-4-amino-5-oxopentanoate + tRNA(Glu) + NADP(+) = L-glutamyl-tRNA(Glu) + NADPH + H(+)</text>
        <dbReference type="Rhea" id="RHEA:12344"/>
        <dbReference type="Rhea" id="RHEA-COMP:9663"/>
        <dbReference type="Rhea" id="RHEA-COMP:9680"/>
        <dbReference type="ChEBI" id="CHEBI:15378"/>
        <dbReference type="ChEBI" id="CHEBI:57501"/>
        <dbReference type="ChEBI" id="CHEBI:57783"/>
        <dbReference type="ChEBI" id="CHEBI:58349"/>
        <dbReference type="ChEBI" id="CHEBI:78442"/>
        <dbReference type="ChEBI" id="CHEBI:78520"/>
        <dbReference type="EC" id="1.2.1.70"/>
    </reaction>
</comment>
<comment type="pathway">
    <text evidence="1">Porphyrin-containing compound metabolism; protoporphyrin-IX biosynthesis; 5-aminolevulinate from L-glutamyl-tRNA(Glu): step 1/2.</text>
</comment>
<comment type="subunit">
    <text evidence="1">Homodimer.</text>
</comment>
<comment type="domain">
    <text evidence="1">Possesses an unusual extended V-shaped dimeric structure with each monomer consisting of three distinct domains arranged along a curved 'spinal' alpha-helix. The N-terminal catalytic domain specifically recognizes the glutamate moiety of the substrate. The second domain is the NADPH-binding domain, and the third C-terminal domain is responsible for dimerization.</text>
</comment>
<comment type="miscellaneous">
    <text evidence="1">During catalysis, the active site Cys acts as a nucleophile attacking the alpha-carbonyl group of tRNA-bound glutamate with the formation of a thioester intermediate between enzyme and glutamate, and the concomitant release of tRNA(Glu). The thioester intermediate is finally reduced by direct hydride transfer from NADPH, to form the product GSA.</text>
</comment>
<comment type="similarity">
    <text evidence="1">Belongs to the glutamyl-tRNA reductase family.</text>
</comment>
<feature type="chain" id="PRO_0000335016" description="Glutamyl-tRNA reductase">
    <location>
        <begin position="1"/>
        <end position="434"/>
    </location>
</feature>
<feature type="active site" description="Nucleophile" evidence="1">
    <location>
        <position position="58"/>
    </location>
</feature>
<feature type="binding site" evidence="1">
    <location>
        <begin position="57"/>
        <end position="60"/>
    </location>
    <ligand>
        <name>substrate</name>
    </ligand>
</feature>
<feature type="binding site" evidence="1">
    <location>
        <position position="116"/>
    </location>
    <ligand>
        <name>substrate</name>
    </ligand>
</feature>
<feature type="binding site" evidence="1">
    <location>
        <begin position="121"/>
        <end position="123"/>
    </location>
    <ligand>
        <name>substrate</name>
    </ligand>
</feature>
<feature type="binding site" evidence="1">
    <location>
        <position position="127"/>
    </location>
    <ligand>
        <name>substrate</name>
    </ligand>
</feature>
<feature type="binding site" evidence="1">
    <location>
        <begin position="196"/>
        <end position="201"/>
    </location>
    <ligand>
        <name>NADP(+)</name>
        <dbReference type="ChEBI" id="CHEBI:58349"/>
    </ligand>
</feature>
<feature type="site" description="Important for activity" evidence="1">
    <location>
        <position position="106"/>
    </location>
</feature>
<protein>
    <recommendedName>
        <fullName evidence="1">Glutamyl-tRNA reductase</fullName>
        <shortName evidence="1">GluTR</shortName>
        <ecNumber evidence="1">1.2.1.70</ecNumber>
    </recommendedName>
</protein>
<gene>
    <name evidence="1" type="primary">hemA</name>
    <name type="ordered locus">BURPS1106A_3613</name>
</gene>
<organism>
    <name type="scientific">Burkholderia pseudomallei (strain 1106a)</name>
    <dbReference type="NCBI Taxonomy" id="357348"/>
    <lineage>
        <taxon>Bacteria</taxon>
        <taxon>Pseudomonadati</taxon>
        <taxon>Pseudomonadota</taxon>
        <taxon>Betaproteobacteria</taxon>
        <taxon>Burkholderiales</taxon>
        <taxon>Burkholderiaceae</taxon>
        <taxon>Burkholderia</taxon>
        <taxon>pseudomallei group</taxon>
    </lineage>
</organism>
<accession>A3NZS3</accession>
<name>HEM1_BURP0</name>
<sequence>MDMQLLTIGINHHTAPVALRERVAFPLEQIKPALSTFKSVFLGHPAPNAPEAAILSTCNRTELYCATNDRAARDAAIRWMSDYHRIPADELAPHVYALPQSEAVRHAFRVASGLDSMVLGETQILGQMKNAVRTASEAGSLGTYLNQLFQRTFAVAKEVRGTTEIGAQSVSMAAAAVRLAQRIFEQVAQQRVLFIGAGEMIELCATHFAAQGPRELVVANRTAERGAKLAERFGGRAMPLADLPARMHEFDIIVSCTASTLPIIGLGAVERAVKARRHRPIFMVDLAVPRDIEPEVGKLKDVFLYTVDDLGAIVREGNASRQAAVAQAEAIIETRVQNFMQWLDARSIVPVIRHMHTQADALRRAEVERARKMLARGDDPDAVLDALSQALTNKLIHGPTSALNRANGADRDSLIDLMRGFYQHAPRSSDTSDR</sequence>